<gene>
    <name type="ordered locus">BruAb1_2043</name>
</gene>
<name>NTPPB_BRUAB</name>
<organism>
    <name type="scientific">Brucella abortus biovar 1 (strain 9-941)</name>
    <dbReference type="NCBI Taxonomy" id="262698"/>
    <lineage>
        <taxon>Bacteria</taxon>
        <taxon>Pseudomonadati</taxon>
        <taxon>Pseudomonadota</taxon>
        <taxon>Alphaproteobacteria</taxon>
        <taxon>Hyphomicrobiales</taxon>
        <taxon>Brucellaceae</taxon>
        <taxon>Brucella/Ochrobactrum group</taxon>
        <taxon>Brucella</taxon>
    </lineage>
</organism>
<keyword id="KW-0963">Cytoplasm</keyword>
<keyword id="KW-0378">Hydrolase</keyword>
<keyword id="KW-0546">Nucleotide metabolism</keyword>
<accession>Q57AJ0</accession>
<evidence type="ECO:0000255" key="1">
    <source>
        <dbReference type="HAMAP-Rule" id="MF_00528"/>
    </source>
</evidence>
<comment type="function">
    <text evidence="1">Nucleoside triphosphate pyrophosphatase that hydrolyzes 7-methyl-GTP (m(7)GTP). May have a dual role in cell division arrest and in preventing the incorporation of modified nucleotides into cellular nucleic acids.</text>
</comment>
<comment type="catalytic activity">
    <reaction evidence="1">
        <text>N(7)-methyl-GTP + H2O = N(7)-methyl-GMP + diphosphate + H(+)</text>
        <dbReference type="Rhea" id="RHEA:58744"/>
        <dbReference type="ChEBI" id="CHEBI:15377"/>
        <dbReference type="ChEBI" id="CHEBI:15378"/>
        <dbReference type="ChEBI" id="CHEBI:33019"/>
        <dbReference type="ChEBI" id="CHEBI:58285"/>
        <dbReference type="ChEBI" id="CHEBI:87133"/>
    </reaction>
</comment>
<comment type="cofactor">
    <cofactor evidence="1">
        <name>a divalent metal cation</name>
        <dbReference type="ChEBI" id="CHEBI:60240"/>
    </cofactor>
</comment>
<comment type="subcellular location">
    <subcellularLocation>
        <location evidence="1">Cytoplasm</location>
    </subcellularLocation>
</comment>
<comment type="similarity">
    <text evidence="1">Belongs to the Maf family. YceF subfamily.</text>
</comment>
<reference key="1">
    <citation type="journal article" date="2005" name="J. Bacteriol.">
        <title>Completion of the genome sequence of Brucella abortus and comparison to the highly similar genomes of Brucella melitensis and Brucella suis.</title>
        <authorList>
            <person name="Halling S.M."/>
            <person name="Peterson-Burch B.D."/>
            <person name="Bricker B.J."/>
            <person name="Zuerner R.L."/>
            <person name="Qing Z."/>
            <person name="Li L.-L."/>
            <person name="Kapur V."/>
            <person name="Alt D.P."/>
            <person name="Olsen S.C."/>
        </authorList>
    </citation>
    <scope>NUCLEOTIDE SEQUENCE [LARGE SCALE GENOMIC DNA]</scope>
    <source>
        <strain>9-941</strain>
    </source>
</reference>
<proteinExistence type="inferred from homology"/>
<dbReference type="EC" id="3.6.1.-" evidence="1"/>
<dbReference type="EMBL" id="AE017223">
    <property type="protein sequence ID" value="AAX75344.1"/>
    <property type="molecule type" value="Genomic_DNA"/>
</dbReference>
<dbReference type="RefSeq" id="WP_002965132.1">
    <property type="nucleotide sequence ID" value="NC_006932.1"/>
</dbReference>
<dbReference type="SMR" id="Q57AJ0"/>
<dbReference type="EnsemblBacteria" id="AAX75344">
    <property type="protein sequence ID" value="AAX75344"/>
    <property type="gene ID" value="BruAb1_2043"/>
</dbReference>
<dbReference type="KEGG" id="bmb:BruAb1_2043"/>
<dbReference type="HOGENOM" id="CLU_040416_1_1_5"/>
<dbReference type="Proteomes" id="UP000000540">
    <property type="component" value="Chromosome I"/>
</dbReference>
<dbReference type="GO" id="GO:0005737">
    <property type="term" value="C:cytoplasm"/>
    <property type="evidence" value="ECO:0007669"/>
    <property type="project" value="UniProtKB-SubCell"/>
</dbReference>
<dbReference type="GO" id="GO:0047429">
    <property type="term" value="F:nucleoside triphosphate diphosphatase activity"/>
    <property type="evidence" value="ECO:0007669"/>
    <property type="project" value="InterPro"/>
</dbReference>
<dbReference type="GO" id="GO:0009117">
    <property type="term" value="P:nucleotide metabolic process"/>
    <property type="evidence" value="ECO:0007669"/>
    <property type="project" value="UniProtKB-KW"/>
</dbReference>
<dbReference type="CDD" id="cd00555">
    <property type="entry name" value="Maf"/>
    <property type="match status" value="1"/>
</dbReference>
<dbReference type="Gene3D" id="3.90.950.10">
    <property type="match status" value="1"/>
</dbReference>
<dbReference type="HAMAP" id="MF_00528">
    <property type="entry name" value="Maf"/>
    <property type="match status" value="1"/>
</dbReference>
<dbReference type="InterPro" id="IPR029001">
    <property type="entry name" value="ITPase-like_fam"/>
</dbReference>
<dbReference type="InterPro" id="IPR003697">
    <property type="entry name" value="Maf-like"/>
</dbReference>
<dbReference type="NCBIfam" id="TIGR00172">
    <property type="entry name" value="maf"/>
    <property type="match status" value="1"/>
</dbReference>
<dbReference type="NCBIfam" id="NF002690">
    <property type="entry name" value="PRK02478.1"/>
    <property type="match status" value="1"/>
</dbReference>
<dbReference type="PANTHER" id="PTHR43213">
    <property type="entry name" value="BIFUNCTIONAL DTTP/UTP PYROPHOSPHATASE/METHYLTRANSFERASE PROTEIN-RELATED"/>
    <property type="match status" value="1"/>
</dbReference>
<dbReference type="PANTHER" id="PTHR43213:SF5">
    <property type="entry name" value="BIFUNCTIONAL DTTP_UTP PYROPHOSPHATASE_METHYLTRANSFERASE PROTEIN-RELATED"/>
    <property type="match status" value="1"/>
</dbReference>
<dbReference type="Pfam" id="PF02545">
    <property type="entry name" value="Maf"/>
    <property type="match status" value="1"/>
</dbReference>
<dbReference type="PIRSF" id="PIRSF006305">
    <property type="entry name" value="Maf"/>
    <property type="match status" value="1"/>
</dbReference>
<dbReference type="SUPFAM" id="SSF52972">
    <property type="entry name" value="ITPase-like"/>
    <property type="match status" value="1"/>
</dbReference>
<feature type="chain" id="PRO_0000267260" description="7-methyl-GTP pyrophosphatase">
    <location>
        <begin position="1"/>
        <end position="199"/>
    </location>
</feature>
<feature type="active site" description="Proton acceptor" evidence="1">
    <location>
        <position position="76"/>
    </location>
</feature>
<feature type="site" description="Important for substrate specificity" evidence="1">
    <location>
        <position position="13"/>
    </location>
</feature>
<feature type="site" description="Important for substrate specificity" evidence="1">
    <location>
        <position position="77"/>
    </location>
</feature>
<feature type="site" description="Important for substrate specificity" evidence="1">
    <location>
        <position position="162"/>
    </location>
</feature>
<sequence>MTVKLVLASKSPFRSALLKNAGIEFSTASADIDERAVEAPLYESGATPEDVAQILAEAKAIDVSEKNPGAVVIGCDQTLSLGDEIFHKPHDMEAARRQLQKISGKTHQLNSAVVLARDGKTLWRHVSIAHMTMRDLDAGFIGRYIGRVGDIALSSVGAYQVEGPGIQLFEKIDGDYFTIVGLPLLPLLAELRREKCIDG</sequence>
<protein>
    <recommendedName>
        <fullName evidence="1">7-methyl-GTP pyrophosphatase</fullName>
        <shortName evidence="1">m(7)GTP pyrophosphatase</shortName>
        <ecNumber evidence="1">3.6.1.-</ecNumber>
    </recommendedName>
</protein>